<proteinExistence type="inferred from homology"/>
<protein>
    <recommendedName>
        <fullName evidence="1">NAD kinase</fullName>
        <ecNumber evidence="1">2.7.1.23</ecNumber>
    </recommendedName>
    <alternativeName>
        <fullName evidence="1">ATP-dependent NAD kinase</fullName>
    </alternativeName>
</protein>
<organism>
    <name type="scientific">Finegoldia magna (strain ATCC 29328 / DSM 20472 / WAL 2508)</name>
    <name type="common">Peptostreptococcus magnus</name>
    <dbReference type="NCBI Taxonomy" id="334413"/>
    <lineage>
        <taxon>Bacteria</taxon>
        <taxon>Bacillati</taxon>
        <taxon>Bacillota</taxon>
        <taxon>Tissierellia</taxon>
        <taxon>Tissierellales</taxon>
        <taxon>Peptoniphilaceae</taxon>
        <taxon>Finegoldia</taxon>
    </lineage>
</organism>
<name>NADK_FINM2</name>
<evidence type="ECO:0000255" key="1">
    <source>
        <dbReference type="HAMAP-Rule" id="MF_00361"/>
    </source>
</evidence>
<keyword id="KW-0067">ATP-binding</keyword>
<keyword id="KW-0963">Cytoplasm</keyword>
<keyword id="KW-0418">Kinase</keyword>
<keyword id="KW-0520">NAD</keyword>
<keyword id="KW-0521">NADP</keyword>
<keyword id="KW-0547">Nucleotide-binding</keyword>
<keyword id="KW-1185">Reference proteome</keyword>
<keyword id="KW-0808">Transferase</keyword>
<sequence>MNNNSKIINIYVNDNQKSLETALIVKDKLEQKGFKPTFDFDENALINLCIGGDGAFLRAVHKYEFSTIPFVGINTGHLGFYQEILIPNIDKFISDLINENYGIEKISLLESKTAIRNSSKTYTHKALNEFVVKSDDSSIVYLDVYIDDNHLESFAGDGIIVSTPSGSTAYNFSAGGSVLYHGLDGFQVTPLAPINSKAYRSLLNSLVVPSKSNVTLYFRDHNFDRKSSIVLADGLNRSYDNVDYVNFTYSDQYINKLVFLKDWYWLNIKDKFL</sequence>
<comment type="function">
    <text evidence="1">Involved in the regulation of the intracellular balance of NAD and NADP, and is a key enzyme in the biosynthesis of NADP. Catalyzes specifically the phosphorylation on 2'-hydroxyl of the adenosine moiety of NAD to yield NADP.</text>
</comment>
<comment type="catalytic activity">
    <reaction evidence="1">
        <text>NAD(+) + ATP = ADP + NADP(+) + H(+)</text>
        <dbReference type="Rhea" id="RHEA:18629"/>
        <dbReference type="ChEBI" id="CHEBI:15378"/>
        <dbReference type="ChEBI" id="CHEBI:30616"/>
        <dbReference type="ChEBI" id="CHEBI:57540"/>
        <dbReference type="ChEBI" id="CHEBI:58349"/>
        <dbReference type="ChEBI" id="CHEBI:456216"/>
        <dbReference type="EC" id="2.7.1.23"/>
    </reaction>
</comment>
<comment type="cofactor">
    <cofactor evidence="1">
        <name>a divalent metal cation</name>
        <dbReference type="ChEBI" id="CHEBI:60240"/>
    </cofactor>
</comment>
<comment type="subcellular location">
    <subcellularLocation>
        <location evidence="1">Cytoplasm</location>
    </subcellularLocation>
</comment>
<comment type="similarity">
    <text evidence="1">Belongs to the NAD kinase family.</text>
</comment>
<feature type="chain" id="PRO_1000205417" description="NAD kinase">
    <location>
        <begin position="1"/>
        <end position="273"/>
    </location>
</feature>
<feature type="active site" description="Proton acceptor" evidence="1">
    <location>
        <position position="53"/>
    </location>
</feature>
<feature type="binding site" evidence="1">
    <location>
        <begin position="53"/>
        <end position="54"/>
    </location>
    <ligand>
        <name>NAD(+)</name>
        <dbReference type="ChEBI" id="CHEBI:57540"/>
    </ligand>
</feature>
<feature type="binding site" evidence="1">
    <location>
        <position position="58"/>
    </location>
    <ligand>
        <name>NAD(+)</name>
        <dbReference type="ChEBI" id="CHEBI:57540"/>
    </ligand>
</feature>
<feature type="binding site" evidence="1">
    <location>
        <begin position="128"/>
        <end position="129"/>
    </location>
    <ligand>
        <name>NAD(+)</name>
        <dbReference type="ChEBI" id="CHEBI:57540"/>
    </ligand>
</feature>
<feature type="binding site" evidence="1">
    <location>
        <position position="157"/>
    </location>
    <ligand>
        <name>NAD(+)</name>
        <dbReference type="ChEBI" id="CHEBI:57540"/>
    </ligand>
</feature>
<feature type="binding site" evidence="1">
    <location>
        <begin position="168"/>
        <end position="173"/>
    </location>
    <ligand>
        <name>NAD(+)</name>
        <dbReference type="ChEBI" id="CHEBI:57540"/>
    </ligand>
</feature>
<feature type="binding site" evidence="1">
    <location>
        <position position="192"/>
    </location>
    <ligand>
        <name>NAD(+)</name>
        <dbReference type="ChEBI" id="CHEBI:57540"/>
    </ligand>
</feature>
<dbReference type="EC" id="2.7.1.23" evidence="1"/>
<dbReference type="EMBL" id="AP008971">
    <property type="protein sequence ID" value="BAG08445.1"/>
    <property type="molecule type" value="Genomic_DNA"/>
</dbReference>
<dbReference type="RefSeq" id="WP_002837640.1">
    <property type="nucleotide sequence ID" value="NC_010376.1"/>
</dbReference>
<dbReference type="SMR" id="B0S255"/>
<dbReference type="STRING" id="334413.FMG_1027"/>
<dbReference type="KEGG" id="fma:FMG_1027"/>
<dbReference type="eggNOG" id="COG0061">
    <property type="taxonomic scope" value="Bacteria"/>
</dbReference>
<dbReference type="HOGENOM" id="CLU_008831_0_3_9"/>
<dbReference type="Proteomes" id="UP000001319">
    <property type="component" value="Chromosome"/>
</dbReference>
<dbReference type="GO" id="GO:0005737">
    <property type="term" value="C:cytoplasm"/>
    <property type="evidence" value="ECO:0007669"/>
    <property type="project" value="UniProtKB-SubCell"/>
</dbReference>
<dbReference type="GO" id="GO:0005524">
    <property type="term" value="F:ATP binding"/>
    <property type="evidence" value="ECO:0007669"/>
    <property type="project" value="UniProtKB-KW"/>
</dbReference>
<dbReference type="GO" id="GO:0046872">
    <property type="term" value="F:metal ion binding"/>
    <property type="evidence" value="ECO:0007669"/>
    <property type="project" value="UniProtKB-UniRule"/>
</dbReference>
<dbReference type="GO" id="GO:0051287">
    <property type="term" value="F:NAD binding"/>
    <property type="evidence" value="ECO:0007669"/>
    <property type="project" value="UniProtKB-ARBA"/>
</dbReference>
<dbReference type="GO" id="GO:0003951">
    <property type="term" value="F:NAD+ kinase activity"/>
    <property type="evidence" value="ECO:0007669"/>
    <property type="project" value="UniProtKB-UniRule"/>
</dbReference>
<dbReference type="GO" id="GO:0019674">
    <property type="term" value="P:NAD metabolic process"/>
    <property type="evidence" value="ECO:0007669"/>
    <property type="project" value="InterPro"/>
</dbReference>
<dbReference type="GO" id="GO:0006741">
    <property type="term" value="P:NADP biosynthetic process"/>
    <property type="evidence" value="ECO:0007669"/>
    <property type="project" value="UniProtKB-UniRule"/>
</dbReference>
<dbReference type="Gene3D" id="3.40.50.10330">
    <property type="entry name" value="Probable inorganic polyphosphate/atp-NAD kinase, domain 1"/>
    <property type="match status" value="1"/>
</dbReference>
<dbReference type="Gene3D" id="2.60.200.30">
    <property type="entry name" value="Probable inorganic polyphosphate/atp-NAD kinase, domain 2"/>
    <property type="match status" value="1"/>
</dbReference>
<dbReference type="HAMAP" id="MF_00361">
    <property type="entry name" value="NAD_kinase"/>
    <property type="match status" value="1"/>
</dbReference>
<dbReference type="InterPro" id="IPR017438">
    <property type="entry name" value="ATP-NAD_kinase_N"/>
</dbReference>
<dbReference type="InterPro" id="IPR017437">
    <property type="entry name" value="ATP-NAD_kinase_PpnK-typ_C"/>
</dbReference>
<dbReference type="InterPro" id="IPR016064">
    <property type="entry name" value="NAD/diacylglycerol_kinase_sf"/>
</dbReference>
<dbReference type="InterPro" id="IPR002504">
    <property type="entry name" value="NADK"/>
</dbReference>
<dbReference type="PANTHER" id="PTHR20275">
    <property type="entry name" value="NAD KINASE"/>
    <property type="match status" value="1"/>
</dbReference>
<dbReference type="PANTHER" id="PTHR20275:SF0">
    <property type="entry name" value="NAD KINASE"/>
    <property type="match status" value="1"/>
</dbReference>
<dbReference type="Pfam" id="PF01513">
    <property type="entry name" value="NAD_kinase"/>
    <property type="match status" value="1"/>
</dbReference>
<dbReference type="Pfam" id="PF20143">
    <property type="entry name" value="NAD_kinase_C"/>
    <property type="match status" value="1"/>
</dbReference>
<dbReference type="SUPFAM" id="SSF111331">
    <property type="entry name" value="NAD kinase/diacylglycerol kinase-like"/>
    <property type="match status" value="1"/>
</dbReference>
<accession>B0S255</accession>
<gene>
    <name evidence="1" type="primary">nadK</name>
    <name type="ordered locus">FMG_1027</name>
</gene>
<reference key="1">
    <citation type="journal article" date="2008" name="DNA Res.">
        <title>Complete genome sequence of Finegoldia magna, an anaerobic opportunistic pathogen.</title>
        <authorList>
            <person name="Goto T."/>
            <person name="Yamashita A."/>
            <person name="Hirakawa H."/>
            <person name="Matsutani M."/>
            <person name="Todo K."/>
            <person name="Ohshima K."/>
            <person name="Toh H."/>
            <person name="Miyamoto K."/>
            <person name="Kuhara S."/>
            <person name="Hattori M."/>
            <person name="Shimizu T."/>
            <person name="Akimoto S."/>
        </authorList>
    </citation>
    <scope>NUCLEOTIDE SEQUENCE [LARGE SCALE GENOMIC DNA]</scope>
    <source>
        <strain>ATCC 29328 / DSM 20472 / WAL 2508</strain>
    </source>
</reference>